<name>MDH_SHEFN</name>
<organism>
    <name type="scientific">Shewanella frigidimarina (strain NCIMB 400)</name>
    <dbReference type="NCBI Taxonomy" id="318167"/>
    <lineage>
        <taxon>Bacteria</taxon>
        <taxon>Pseudomonadati</taxon>
        <taxon>Pseudomonadota</taxon>
        <taxon>Gammaproteobacteria</taxon>
        <taxon>Alteromonadales</taxon>
        <taxon>Shewanellaceae</taxon>
        <taxon>Shewanella</taxon>
    </lineage>
</organism>
<protein>
    <recommendedName>
        <fullName evidence="1">Malate dehydrogenase</fullName>
        <ecNumber evidence="1">1.1.1.37</ecNumber>
    </recommendedName>
</protein>
<gene>
    <name evidence="1" type="primary">mdh</name>
    <name type="ordered locus">Sfri_3173</name>
</gene>
<proteinExistence type="inferred from homology"/>
<feature type="chain" id="PRO_0000294302" description="Malate dehydrogenase">
    <location>
        <begin position="1"/>
        <end position="311"/>
    </location>
</feature>
<feature type="active site" description="Proton acceptor" evidence="1">
    <location>
        <position position="177"/>
    </location>
</feature>
<feature type="binding site" evidence="1">
    <location>
        <begin position="7"/>
        <end position="13"/>
    </location>
    <ligand>
        <name>NAD(+)</name>
        <dbReference type="ChEBI" id="CHEBI:57540"/>
    </ligand>
</feature>
<feature type="binding site" evidence="1">
    <location>
        <position position="34"/>
    </location>
    <ligand>
        <name>NAD(+)</name>
        <dbReference type="ChEBI" id="CHEBI:57540"/>
    </ligand>
</feature>
<feature type="binding site" evidence="1">
    <location>
        <position position="81"/>
    </location>
    <ligand>
        <name>substrate</name>
    </ligand>
</feature>
<feature type="binding site" evidence="1">
    <location>
        <position position="87"/>
    </location>
    <ligand>
        <name>substrate</name>
    </ligand>
</feature>
<feature type="binding site" evidence="1">
    <location>
        <position position="94"/>
    </location>
    <ligand>
        <name>NAD(+)</name>
        <dbReference type="ChEBI" id="CHEBI:57540"/>
    </ligand>
</feature>
<feature type="binding site" evidence="1">
    <location>
        <begin position="117"/>
        <end position="119"/>
    </location>
    <ligand>
        <name>NAD(+)</name>
        <dbReference type="ChEBI" id="CHEBI:57540"/>
    </ligand>
</feature>
<feature type="binding site" evidence="1">
    <location>
        <position position="119"/>
    </location>
    <ligand>
        <name>substrate</name>
    </ligand>
</feature>
<feature type="binding site" evidence="1">
    <location>
        <position position="153"/>
    </location>
    <ligand>
        <name>substrate</name>
    </ligand>
</feature>
<feature type="binding site" evidence="1">
    <location>
        <position position="227"/>
    </location>
    <ligand>
        <name>NAD(+)</name>
        <dbReference type="ChEBI" id="CHEBI:57540"/>
    </ligand>
</feature>
<reference key="1">
    <citation type="submission" date="2006-08" db="EMBL/GenBank/DDBJ databases">
        <title>Complete sequence of Shewanella frigidimarina NCIMB 400.</title>
        <authorList>
            <consortium name="US DOE Joint Genome Institute"/>
            <person name="Copeland A."/>
            <person name="Lucas S."/>
            <person name="Lapidus A."/>
            <person name="Barry K."/>
            <person name="Detter J.C."/>
            <person name="Glavina del Rio T."/>
            <person name="Hammon N."/>
            <person name="Israni S."/>
            <person name="Dalin E."/>
            <person name="Tice H."/>
            <person name="Pitluck S."/>
            <person name="Fredrickson J.K."/>
            <person name="Kolker E."/>
            <person name="McCuel L.A."/>
            <person name="DiChristina T."/>
            <person name="Nealson K.H."/>
            <person name="Newman D."/>
            <person name="Tiedje J.M."/>
            <person name="Zhou J."/>
            <person name="Romine M.F."/>
            <person name="Culley D.E."/>
            <person name="Serres M."/>
            <person name="Chertkov O."/>
            <person name="Brettin T."/>
            <person name="Bruce D."/>
            <person name="Han C."/>
            <person name="Tapia R."/>
            <person name="Gilna P."/>
            <person name="Schmutz J."/>
            <person name="Larimer F."/>
            <person name="Land M."/>
            <person name="Hauser L."/>
            <person name="Kyrpides N."/>
            <person name="Mikhailova N."/>
            <person name="Richardson P."/>
        </authorList>
    </citation>
    <scope>NUCLEOTIDE SEQUENCE [LARGE SCALE GENOMIC DNA]</scope>
    <source>
        <strain>NCIMB 400</strain>
    </source>
</reference>
<accession>Q07YA5</accession>
<dbReference type="EC" id="1.1.1.37" evidence="1"/>
<dbReference type="EMBL" id="CP000447">
    <property type="protein sequence ID" value="ABI73009.1"/>
    <property type="molecule type" value="Genomic_DNA"/>
</dbReference>
<dbReference type="RefSeq" id="WP_011638612.1">
    <property type="nucleotide sequence ID" value="NC_008345.1"/>
</dbReference>
<dbReference type="SMR" id="Q07YA5"/>
<dbReference type="STRING" id="318167.Sfri_3173"/>
<dbReference type="GeneID" id="90569829"/>
<dbReference type="KEGG" id="sfr:Sfri_3173"/>
<dbReference type="eggNOG" id="COG0039">
    <property type="taxonomic scope" value="Bacteria"/>
</dbReference>
<dbReference type="HOGENOM" id="CLU_047181_1_0_6"/>
<dbReference type="OrthoDB" id="9802969at2"/>
<dbReference type="Proteomes" id="UP000000684">
    <property type="component" value="Chromosome"/>
</dbReference>
<dbReference type="GO" id="GO:0005737">
    <property type="term" value="C:cytoplasm"/>
    <property type="evidence" value="ECO:0007669"/>
    <property type="project" value="TreeGrafter"/>
</dbReference>
<dbReference type="GO" id="GO:0030060">
    <property type="term" value="F:L-malate dehydrogenase (NAD+) activity"/>
    <property type="evidence" value="ECO:0007669"/>
    <property type="project" value="UniProtKB-UniRule"/>
</dbReference>
<dbReference type="GO" id="GO:0006108">
    <property type="term" value="P:malate metabolic process"/>
    <property type="evidence" value="ECO:0007669"/>
    <property type="project" value="InterPro"/>
</dbReference>
<dbReference type="GO" id="GO:0006099">
    <property type="term" value="P:tricarboxylic acid cycle"/>
    <property type="evidence" value="ECO:0007669"/>
    <property type="project" value="UniProtKB-UniRule"/>
</dbReference>
<dbReference type="CDD" id="cd01337">
    <property type="entry name" value="MDH_glyoxysomal_mitochondrial"/>
    <property type="match status" value="1"/>
</dbReference>
<dbReference type="FunFam" id="3.40.50.720:FF:000017">
    <property type="entry name" value="Malate dehydrogenase"/>
    <property type="match status" value="1"/>
</dbReference>
<dbReference type="FunFam" id="3.90.110.10:FF:000001">
    <property type="entry name" value="Malate dehydrogenase"/>
    <property type="match status" value="1"/>
</dbReference>
<dbReference type="Gene3D" id="3.90.110.10">
    <property type="entry name" value="Lactate dehydrogenase/glycoside hydrolase, family 4, C-terminal"/>
    <property type="match status" value="1"/>
</dbReference>
<dbReference type="Gene3D" id="3.40.50.720">
    <property type="entry name" value="NAD(P)-binding Rossmann-like Domain"/>
    <property type="match status" value="1"/>
</dbReference>
<dbReference type="HAMAP" id="MF_01516">
    <property type="entry name" value="Malate_dehydrog_1"/>
    <property type="match status" value="1"/>
</dbReference>
<dbReference type="InterPro" id="IPR001557">
    <property type="entry name" value="L-lactate/malate_DH"/>
</dbReference>
<dbReference type="InterPro" id="IPR022383">
    <property type="entry name" value="Lactate/malate_DH_C"/>
</dbReference>
<dbReference type="InterPro" id="IPR001236">
    <property type="entry name" value="Lactate/malate_DH_N"/>
</dbReference>
<dbReference type="InterPro" id="IPR015955">
    <property type="entry name" value="Lactate_DH/Glyco_Ohase_4_C"/>
</dbReference>
<dbReference type="InterPro" id="IPR001252">
    <property type="entry name" value="Malate_DH_AS"/>
</dbReference>
<dbReference type="InterPro" id="IPR010097">
    <property type="entry name" value="Malate_DH_type1"/>
</dbReference>
<dbReference type="InterPro" id="IPR023958">
    <property type="entry name" value="Malate_DH_type1_bac"/>
</dbReference>
<dbReference type="InterPro" id="IPR036291">
    <property type="entry name" value="NAD(P)-bd_dom_sf"/>
</dbReference>
<dbReference type="NCBIfam" id="TIGR01772">
    <property type="entry name" value="MDH_euk_gproteo"/>
    <property type="match status" value="1"/>
</dbReference>
<dbReference type="PANTHER" id="PTHR11540">
    <property type="entry name" value="MALATE AND LACTATE DEHYDROGENASE"/>
    <property type="match status" value="1"/>
</dbReference>
<dbReference type="PANTHER" id="PTHR11540:SF16">
    <property type="entry name" value="MALATE DEHYDROGENASE, MITOCHONDRIAL"/>
    <property type="match status" value="1"/>
</dbReference>
<dbReference type="Pfam" id="PF02866">
    <property type="entry name" value="Ldh_1_C"/>
    <property type="match status" value="1"/>
</dbReference>
<dbReference type="Pfam" id="PF00056">
    <property type="entry name" value="Ldh_1_N"/>
    <property type="match status" value="1"/>
</dbReference>
<dbReference type="PIRSF" id="PIRSF000102">
    <property type="entry name" value="Lac_mal_DH"/>
    <property type="match status" value="1"/>
</dbReference>
<dbReference type="SUPFAM" id="SSF56327">
    <property type="entry name" value="LDH C-terminal domain-like"/>
    <property type="match status" value="1"/>
</dbReference>
<dbReference type="SUPFAM" id="SSF51735">
    <property type="entry name" value="NAD(P)-binding Rossmann-fold domains"/>
    <property type="match status" value="1"/>
</dbReference>
<dbReference type="PROSITE" id="PS00068">
    <property type="entry name" value="MDH"/>
    <property type="match status" value="1"/>
</dbReference>
<comment type="function">
    <text evidence="1">Catalyzes the reversible oxidation of malate to oxaloacetate.</text>
</comment>
<comment type="catalytic activity">
    <reaction evidence="1">
        <text>(S)-malate + NAD(+) = oxaloacetate + NADH + H(+)</text>
        <dbReference type="Rhea" id="RHEA:21432"/>
        <dbReference type="ChEBI" id="CHEBI:15378"/>
        <dbReference type="ChEBI" id="CHEBI:15589"/>
        <dbReference type="ChEBI" id="CHEBI:16452"/>
        <dbReference type="ChEBI" id="CHEBI:57540"/>
        <dbReference type="ChEBI" id="CHEBI:57945"/>
        <dbReference type="EC" id="1.1.1.37"/>
    </reaction>
</comment>
<comment type="subunit">
    <text evidence="1">Homodimer.</text>
</comment>
<comment type="similarity">
    <text evidence="1">Belongs to the LDH/MDH superfamily. MDH type 1 family.</text>
</comment>
<evidence type="ECO:0000255" key="1">
    <source>
        <dbReference type="HAMAP-Rule" id="MF_01516"/>
    </source>
</evidence>
<keyword id="KW-0520">NAD</keyword>
<keyword id="KW-0560">Oxidoreductase</keyword>
<keyword id="KW-1185">Reference proteome</keyword>
<keyword id="KW-0816">Tricarboxylic acid cycle</keyword>
<sequence>MKVAVLGAAGGIGQALALLLKTQLPAGSKLSLYDIAPVTPGVAVDLSHIPTDVEVKGFAGQDPTDALVGADVVLMSAGVARKPGMDRSDLFNINAGIVRNLMEKVAVTCPKALVGIITNPVNTTVAIAAEVLKNAGVYDKNRLFGITTLDVIRSETFIAELKGLNVADVKVNVIGGHSGVTILPLLSQVEGVTFTDEEVAAMTTRIQNAGTEVVEAKAGGGSATLSMGQAACRFGLSLVRGLQGEANVVECAYVDGGSEHATFFAQPILLGKNGVEKVLPYGEISAFEANARDAMLDTLKGDIKLGVEFVK</sequence>